<reference key="1">
    <citation type="journal article" date="2007" name="Appl. Environ. Microbiol.">
        <title>Genome sequence of the cellulolytic gliding bacterium Cytophaga hutchinsonii.</title>
        <authorList>
            <person name="Xie G."/>
            <person name="Bruce D.C."/>
            <person name="Challacombe J.F."/>
            <person name="Chertkov O."/>
            <person name="Detter J.C."/>
            <person name="Gilna P."/>
            <person name="Han C.S."/>
            <person name="Lucas S."/>
            <person name="Misra M."/>
            <person name="Myers G.L."/>
            <person name="Richardson P."/>
            <person name="Tapia R."/>
            <person name="Thayer N."/>
            <person name="Thompson L.S."/>
            <person name="Brettin T.S."/>
            <person name="Henrissat B."/>
            <person name="Wilson D.B."/>
            <person name="McBride M.J."/>
        </authorList>
    </citation>
    <scope>NUCLEOTIDE SEQUENCE [LARGE SCALE GENOMIC DNA]</scope>
    <source>
        <strain>ATCC 33406 / DSM 1761 / JCM 20678 / CIP 103989 / IAM 12607 / NBRC 15051 / NCIMB 9469 / D465</strain>
    </source>
</reference>
<sequence length="515" mass="57994">MEHLHRKQITNTFTETFPGDLSMNNTTRQTPGVLYCSVLPTPVHHPQLLAWSADVAEMLGLESPVPEDVLILGGNTVNPTMKPYASCYAGHQFGNWAGQLGDGRAISLGFCSGKDSMEYELQLKGAGPTPYSRNSDGRAVLRSSLREYLMSEAMHYLGVPTTRALSLVSTGDAVLRDMFYNGHAAYEPGAVVLRVAPSFIRFGNFEILAERNNRDLSQQLCDWVITRYYPEIRGEDRVVQLFQAVAERTADMVVQWLRVGFVHGVMNTDNMSILGVTIDYGPYSFVDEYDARFTPNTTDLPGRRYAFGNQAAVAYWNLGRLANALAFLVPETDKLVAVLKNYQDVYETKYYTMMANKLGFDALREDDRLLIDSFEEMLRTVKPDMTMFYQLLIDLPADPGTAADVKQFFQSCFYTEADEALLHTCIAAYSKRIKTNTCSKEVSAEKMRAANPRFVLRNYILHEAIEKLEKGDDALLKKLEEYIKQPYSKNADEYFIKRPDWAAQKAGCSMLSCSS</sequence>
<accession>Q11T54</accession>
<evidence type="ECO:0000255" key="1">
    <source>
        <dbReference type="HAMAP-Rule" id="MF_00692"/>
    </source>
</evidence>
<dbReference type="EC" id="2.7.7.-" evidence="1"/>
<dbReference type="EC" id="2.7.7.108" evidence="1"/>
<dbReference type="EMBL" id="CP000383">
    <property type="protein sequence ID" value="ABG59410.1"/>
    <property type="molecule type" value="Genomic_DNA"/>
</dbReference>
<dbReference type="RefSeq" id="WP_011585527.1">
    <property type="nucleotide sequence ID" value="NC_008255.1"/>
</dbReference>
<dbReference type="SMR" id="Q11T54"/>
<dbReference type="STRING" id="269798.CHU_2147"/>
<dbReference type="DNASU" id="4187071"/>
<dbReference type="KEGG" id="chu:CHU_2147"/>
<dbReference type="eggNOG" id="COG0397">
    <property type="taxonomic scope" value="Bacteria"/>
</dbReference>
<dbReference type="HOGENOM" id="CLU_010245_4_0_10"/>
<dbReference type="OrthoDB" id="9773505at2"/>
<dbReference type="Proteomes" id="UP000001822">
    <property type="component" value="Chromosome"/>
</dbReference>
<dbReference type="GO" id="GO:0070733">
    <property type="term" value="F:AMPylase activity"/>
    <property type="evidence" value="ECO:0007669"/>
    <property type="project" value="RHEA"/>
</dbReference>
<dbReference type="GO" id="GO:0005524">
    <property type="term" value="F:ATP binding"/>
    <property type="evidence" value="ECO:0007669"/>
    <property type="project" value="UniProtKB-UniRule"/>
</dbReference>
<dbReference type="GO" id="GO:0000287">
    <property type="term" value="F:magnesium ion binding"/>
    <property type="evidence" value="ECO:0007669"/>
    <property type="project" value="UniProtKB-UniRule"/>
</dbReference>
<dbReference type="HAMAP" id="MF_00692">
    <property type="entry name" value="YdiU_SelO"/>
    <property type="match status" value="1"/>
</dbReference>
<dbReference type="InterPro" id="IPR003846">
    <property type="entry name" value="SelO"/>
</dbReference>
<dbReference type="NCBIfam" id="NF000658">
    <property type="entry name" value="PRK00029.1"/>
    <property type="match status" value="1"/>
</dbReference>
<dbReference type="PANTHER" id="PTHR32057">
    <property type="entry name" value="PROTEIN ADENYLYLTRANSFERASE SELO, MITOCHONDRIAL"/>
    <property type="match status" value="1"/>
</dbReference>
<dbReference type="PANTHER" id="PTHR32057:SF14">
    <property type="entry name" value="PROTEIN ADENYLYLTRANSFERASE SELO, MITOCHONDRIAL"/>
    <property type="match status" value="1"/>
</dbReference>
<dbReference type="Pfam" id="PF02696">
    <property type="entry name" value="SelO"/>
    <property type="match status" value="1"/>
</dbReference>
<organism>
    <name type="scientific">Cytophaga hutchinsonii (strain ATCC 33406 / DSM 1761 / CIP 103989 / NBRC 15051 / NCIMB 9469 / D465)</name>
    <dbReference type="NCBI Taxonomy" id="269798"/>
    <lineage>
        <taxon>Bacteria</taxon>
        <taxon>Pseudomonadati</taxon>
        <taxon>Bacteroidota</taxon>
        <taxon>Cytophagia</taxon>
        <taxon>Cytophagales</taxon>
        <taxon>Cytophagaceae</taxon>
        <taxon>Cytophaga</taxon>
    </lineage>
</organism>
<gene>
    <name evidence="1" type="primary">ydiU</name>
    <name evidence="1" type="synonym">selO</name>
    <name type="ordered locus">CHU_2147</name>
</gene>
<comment type="function">
    <text evidence="1">Nucleotidyltransferase involved in the post-translational modification of proteins. It can catalyze the addition of adenosine monophosphate (AMP) or uridine monophosphate (UMP) to a protein, resulting in modifications known as AMPylation and UMPylation.</text>
</comment>
<comment type="catalytic activity">
    <reaction evidence="1">
        <text>L-seryl-[protein] + ATP = 3-O-(5'-adenylyl)-L-seryl-[protein] + diphosphate</text>
        <dbReference type="Rhea" id="RHEA:58120"/>
        <dbReference type="Rhea" id="RHEA-COMP:9863"/>
        <dbReference type="Rhea" id="RHEA-COMP:15073"/>
        <dbReference type="ChEBI" id="CHEBI:29999"/>
        <dbReference type="ChEBI" id="CHEBI:30616"/>
        <dbReference type="ChEBI" id="CHEBI:33019"/>
        <dbReference type="ChEBI" id="CHEBI:142516"/>
        <dbReference type="EC" id="2.7.7.108"/>
    </reaction>
</comment>
<comment type="catalytic activity">
    <reaction evidence="1">
        <text>L-threonyl-[protein] + ATP = 3-O-(5'-adenylyl)-L-threonyl-[protein] + diphosphate</text>
        <dbReference type="Rhea" id="RHEA:54292"/>
        <dbReference type="Rhea" id="RHEA-COMP:11060"/>
        <dbReference type="Rhea" id="RHEA-COMP:13847"/>
        <dbReference type="ChEBI" id="CHEBI:30013"/>
        <dbReference type="ChEBI" id="CHEBI:30616"/>
        <dbReference type="ChEBI" id="CHEBI:33019"/>
        <dbReference type="ChEBI" id="CHEBI:138113"/>
        <dbReference type="EC" id="2.7.7.108"/>
    </reaction>
</comment>
<comment type="catalytic activity">
    <reaction evidence="1">
        <text>L-tyrosyl-[protein] + ATP = O-(5'-adenylyl)-L-tyrosyl-[protein] + diphosphate</text>
        <dbReference type="Rhea" id="RHEA:54288"/>
        <dbReference type="Rhea" id="RHEA-COMP:10136"/>
        <dbReference type="Rhea" id="RHEA-COMP:13846"/>
        <dbReference type="ChEBI" id="CHEBI:30616"/>
        <dbReference type="ChEBI" id="CHEBI:33019"/>
        <dbReference type="ChEBI" id="CHEBI:46858"/>
        <dbReference type="ChEBI" id="CHEBI:83624"/>
        <dbReference type="EC" id="2.7.7.108"/>
    </reaction>
</comment>
<comment type="catalytic activity">
    <reaction evidence="1">
        <text>L-histidyl-[protein] + UTP = N(tele)-(5'-uridylyl)-L-histidyl-[protein] + diphosphate</text>
        <dbReference type="Rhea" id="RHEA:83891"/>
        <dbReference type="Rhea" id="RHEA-COMP:9745"/>
        <dbReference type="Rhea" id="RHEA-COMP:20239"/>
        <dbReference type="ChEBI" id="CHEBI:29979"/>
        <dbReference type="ChEBI" id="CHEBI:33019"/>
        <dbReference type="ChEBI" id="CHEBI:46398"/>
        <dbReference type="ChEBI" id="CHEBI:233474"/>
    </reaction>
</comment>
<comment type="catalytic activity">
    <reaction evidence="1">
        <text>L-seryl-[protein] + UTP = O-(5'-uridylyl)-L-seryl-[protein] + diphosphate</text>
        <dbReference type="Rhea" id="RHEA:64604"/>
        <dbReference type="Rhea" id="RHEA-COMP:9863"/>
        <dbReference type="Rhea" id="RHEA-COMP:16635"/>
        <dbReference type="ChEBI" id="CHEBI:29999"/>
        <dbReference type="ChEBI" id="CHEBI:33019"/>
        <dbReference type="ChEBI" id="CHEBI:46398"/>
        <dbReference type="ChEBI" id="CHEBI:156051"/>
    </reaction>
</comment>
<comment type="catalytic activity">
    <reaction evidence="1">
        <text>L-tyrosyl-[protein] + UTP = O-(5'-uridylyl)-L-tyrosyl-[protein] + diphosphate</text>
        <dbReference type="Rhea" id="RHEA:83887"/>
        <dbReference type="Rhea" id="RHEA-COMP:10136"/>
        <dbReference type="Rhea" id="RHEA-COMP:20238"/>
        <dbReference type="ChEBI" id="CHEBI:33019"/>
        <dbReference type="ChEBI" id="CHEBI:46398"/>
        <dbReference type="ChEBI" id="CHEBI:46858"/>
        <dbReference type="ChEBI" id="CHEBI:90602"/>
    </reaction>
</comment>
<comment type="cofactor">
    <cofactor evidence="1">
        <name>Mg(2+)</name>
        <dbReference type="ChEBI" id="CHEBI:18420"/>
    </cofactor>
    <cofactor evidence="1">
        <name>Mn(2+)</name>
        <dbReference type="ChEBI" id="CHEBI:29035"/>
    </cofactor>
</comment>
<comment type="similarity">
    <text evidence="1">Belongs to the SELO family.</text>
</comment>
<name>SELO_CYTH3</name>
<keyword id="KW-0067">ATP-binding</keyword>
<keyword id="KW-0460">Magnesium</keyword>
<keyword id="KW-0464">Manganese</keyword>
<keyword id="KW-0479">Metal-binding</keyword>
<keyword id="KW-0547">Nucleotide-binding</keyword>
<keyword id="KW-0548">Nucleotidyltransferase</keyword>
<keyword id="KW-1185">Reference proteome</keyword>
<keyword id="KW-0808">Transferase</keyword>
<protein>
    <recommendedName>
        <fullName evidence="1">Protein nucleotidyltransferase YdiU</fullName>
        <ecNumber evidence="1">2.7.7.-</ecNumber>
    </recommendedName>
    <alternativeName>
        <fullName evidence="1">Protein adenylyltransferase YdiU</fullName>
        <ecNumber evidence="1">2.7.7.108</ecNumber>
    </alternativeName>
    <alternativeName>
        <fullName evidence="1">Protein uridylyltransferase YdiU</fullName>
        <ecNumber evidence="1">2.7.7.-</ecNumber>
    </alternativeName>
</protein>
<proteinExistence type="inferred from homology"/>
<feature type="chain" id="PRO_0000271822" description="Protein nucleotidyltransferase YdiU">
    <location>
        <begin position="1"/>
        <end position="515"/>
    </location>
</feature>
<feature type="active site" description="Proton acceptor" evidence="1">
    <location>
        <position position="269"/>
    </location>
</feature>
<feature type="binding site" evidence="1">
    <location>
        <position position="101"/>
    </location>
    <ligand>
        <name>ATP</name>
        <dbReference type="ChEBI" id="CHEBI:30616"/>
    </ligand>
</feature>
<feature type="binding site" evidence="1">
    <location>
        <position position="103"/>
    </location>
    <ligand>
        <name>ATP</name>
        <dbReference type="ChEBI" id="CHEBI:30616"/>
    </ligand>
</feature>
<feature type="binding site" evidence="1">
    <location>
        <position position="104"/>
    </location>
    <ligand>
        <name>ATP</name>
        <dbReference type="ChEBI" id="CHEBI:30616"/>
    </ligand>
</feature>
<feature type="binding site" evidence="1">
    <location>
        <position position="124"/>
    </location>
    <ligand>
        <name>ATP</name>
        <dbReference type="ChEBI" id="CHEBI:30616"/>
    </ligand>
</feature>
<feature type="binding site" evidence="1">
    <location>
        <position position="136"/>
    </location>
    <ligand>
        <name>ATP</name>
        <dbReference type="ChEBI" id="CHEBI:30616"/>
    </ligand>
</feature>
<feature type="binding site" evidence="1">
    <location>
        <position position="137"/>
    </location>
    <ligand>
        <name>ATP</name>
        <dbReference type="ChEBI" id="CHEBI:30616"/>
    </ligand>
</feature>
<feature type="binding site" evidence="1">
    <location>
        <position position="194"/>
    </location>
    <ligand>
        <name>ATP</name>
        <dbReference type="ChEBI" id="CHEBI:30616"/>
    </ligand>
</feature>
<feature type="binding site" evidence="1">
    <location>
        <position position="201"/>
    </location>
    <ligand>
        <name>ATP</name>
        <dbReference type="ChEBI" id="CHEBI:30616"/>
    </ligand>
</feature>
<feature type="binding site" evidence="1">
    <location>
        <position position="270"/>
    </location>
    <ligand>
        <name>Mg(2+)</name>
        <dbReference type="ChEBI" id="CHEBI:18420"/>
    </ligand>
</feature>
<feature type="binding site" evidence="1">
    <location>
        <position position="279"/>
    </location>
    <ligand>
        <name>ATP</name>
        <dbReference type="ChEBI" id="CHEBI:30616"/>
    </ligand>
</feature>
<feature type="binding site" evidence="1">
    <location>
        <position position="279"/>
    </location>
    <ligand>
        <name>Mg(2+)</name>
        <dbReference type="ChEBI" id="CHEBI:18420"/>
    </ligand>
</feature>